<organism>
    <name type="scientific">Mycobacterium tuberculosis (strain ATCC 25618 / H37Rv)</name>
    <dbReference type="NCBI Taxonomy" id="83332"/>
    <lineage>
        <taxon>Bacteria</taxon>
        <taxon>Bacillati</taxon>
        <taxon>Actinomycetota</taxon>
        <taxon>Actinomycetes</taxon>
        <taxon>Mycobacteriales</taxon>
        <taxon>Mycobacteriaceae</taxon>
        <taxon>Mycobacterium</taxon>
        <taxon>Mycobacterium tuberculosis complex</taxon>
    </lineage>
</organism>
<comment type="subcellular location">
    <subcellularLocation>
        <location evidence="1">Cell membrane</location>
        <topology evidence="1">Lipid-anchor</topology>
    </subcellularLocation>
</comment>
<reference key="1">
    <citation type="journal article" date="1998" name="Nature">
        <title>Deciphering the biology of Mycobacterium tuberculosis from the complete genome sequence.</title>
        <authorList>
            <person name="Cole S.T."/>
            <person name="Brosch R."/>
            <person name="Parkhill J."/>
            <person name="Garnier T."/>
            <person name="Churcher C.M."/>
            <person name="Harris D.E."/>
            <person name="Gordon S.V."/>
            <person name="Eiglmeier K."/>
            <person name="Gas S."/>
            <person name="Barry C.E. III"/>
            <person name="Tekaia F."/>
            <person name="Badcock K."/>
            <person name="Basham D."/>
            <person name="Brown D."/>
            <person name="Chillingworth T."/>
            <person name="Connor R."/>
            <person name="Davies R.M."/>
            <person name="Devlin K."/>
            <person name="Feltwell T."/>
            <person name="Gentles S."/>
            <person name="Hamlin N."/>
            <person name="Holroyd S."/>
            <person name="Hornsby T."/>
            <person name="Jagels K."/>
            <person name="Krogh A."/>
            <person name="McLean J."/>
            <person name="Moule S."/>
            <person name="Murphy L.D."/>
            <person name="Oliver S."/>
            <person name="Osborne J."/>
            <person name="Quail M.A."/>
            <person name="Rajandream M.A."/>
            <person name="Rogers J."/>
            <person name="Rutter S."/>
            <person name="Seeger K."/>
            <person name="Skelton S."/>
            <person name="Squares S."/>
            <person name="Squares R."/>
            <person name="Sulston J.E."/>
            <person name="Taylor K."/>
            <person name="Whitehead S."/>
            <person name="Barrell B.G."/>
        </authorList>
    </citation>
    <scope>NUCLEOTIDE SEQUENCE [LARGE SCALE GENOMIC DNA]</scope>
    <source>
        <strain>ATCC 25618 / H37Rv</strain>
    </source>
</reference>
<reference key="2">
    <citation type="journal article" date="2011" name="Mol. Cell. Proteomics">
        <title>Proteogenomic analysis of Mycobacterium tuberculosis by high resolution mass spectrometry.</title>
        <authorList>
            <person name="Kelkar D.S."/>
            <person name="Kumar D."/>
            <person name="Kumar P."/>
            <person name="Balakrishnan L."/>
            <person name="Muthusamy B."/>
            <person name="Yadav A.K."/>
            <person name="Shrivastava P."/>
            <person name="Marimuthu A."/>
            <person name="Anand S."/>
            <person name="Sundaram H."/>
            <person name="Kingsbury R."/>
            <person name="Harsha H.C."/>
            <person name="Nair B."/>
            <person name="Prasad T.S."/>
            <person name="Chauhan D.S."/>
            <person name="Katoch K."/>
            <person name="Katoch V.M."/>
            <person name="Kumar P."/>
            <person name="Chaerkady R."/>
            <person name="Ramachandran S."/>
            <person name="Dash D."/>
            <person name="Pandey A."/>
        </authorList>
    </citation>
    <scope>IDENTIFICATION BY MASS SPECTROMETRY [LARGE SCALE ANALYSIS]</scope>
    <source>
        <strain>ATCC 25618 / H37Rv</strain>
    </source>
</reference>
<gene>
    <name type="primary">lprB</name>
    <name type="ordered locus">Rv1274</name>
    <name type="ORF">MTCY50.08c</name>
</gene>
<feature type="signal peptide" evidence="1">
    <location>
        <begin position="1"/>
        <end position="24"/>
    </location>
</feature>
<feature type="chain" id="PRO_0000018138" description="Putative lipoprotein LprB">
    <location>
        <begin position="25"/>
        <end position="185"/>
    </location>
</feature>
<feature type="region of interest" description="Disordered" evidence="2">
    <location>
        <begin position="26"/>
        <end position="50"/>
    </location>
</feature>
<feature type="lipid moiety-binding region" description="N-palmitoyl cysteine; alternate" evidence="1">
    <location>
        <position position="25"/>
    </location>
</feature>
<feature type="lipid moiety-binding region" description="S-diacylglycerol cysteine" evidence="1">
    <location>
        <position position="25"/>
    </location>
</feature>
<accession>P9WK53</accession>
<accession>L0T7T1</accession>
<accession>Q11045</accession>
<evidence type="ECO:0000255" key="1">
    <source>
        <dbReference type="PROSITE-ProRule" id="PRU00303"/>
    </source>
</evidence>
<evidence type="ECO:0000256" key="2">
    <source>
        <dbReference type="SAM" id="MobiDB-lite"/>
    </source>
</evidence>
<keyword id="KW-1003">Cell membrane</keyword>
<keyword id="KW-0449">Lipoprotein</keyword>
<keyword id="KW-0472">Membrane</keyword>
<keyword id="KW-0564">Palmitate</keyword>
<keyword id="KW-1185">Reference proteome</keyword>
<keyword id="KW-0732">Signal</keyword>
<name>LPRB_MYCTU</name>
<sequence length="185" mass="19739">MRRKVRRLTLAVSALVALFPAVAGCSDSGDNKPGATIPSTPANAEGRHGPFFPQCGGVSDQTVTELTRVTGLVNTAKNSVGCQWLAGGGILGPHFSFSWYRGSPIGRERKTEELSRASVEDINIDGHSGFIAIGNEPSLGDSLCEVGIQFSDDFIEWSVSFSQKPFPLPCDIAKELTRQSIANSK</sequence>
<dbReference type="EMBL" id="AL123456">
    <property type="protein sequence ID" value="CCP44030.1"/>
    <property type="molecule type" value="Genomic_DNA"/>
</dbReference>
<dbReference type="PIR" id="B70755">
    <property type="entry name" value="B70755"/>
</dbReference>
<dbReference type="RefSeq" id="NP_215790.1">
    <property type="nucleotide sequence ID" value="NC_000962.3"/>
</dbReference>
<dbReference type="RefSeq" id="WP_003901123.1">
    <property type="nucleotide sequence ID" value="NZ_NVQJ01000030.1"/>
</dbReference>
<dbReference type="STRING" id="83332.Rv1274"/>
<dbReference type="PaxDb" id="83332-Rv1274"/>
<dbReference type="DNASU" id="887011"/>
<dbReference type="GeneID" id="887011"/>
<dbReference type="KEGG" id="mtu:Rv1274"/>
<dbReference type="KEGG" id="mtv:RVBD_1274"/>
<dbReference type="TubercuList" id="Rv1274"/>
<dbReference type="eggNOG" id="COG1188">
    <property type="taxonomic scope" value="Bacteria"/>
</dbReference>
<dbReference type="InParanoid" id="P9WK53"/>
<dbReference type="OrthoDB" id="4624021at2"/>
<dbReference type="Proteomes" id="UP000001584">
    <property type="component" value="Chromosome"/>
</dbReference>
<dbReference type="GO" id="GO:0005886">
    <property type="term" value="C:plasma membrane"/>
    <property type="evidence" value="ECO:0007669"/>
    <property type="project" value="UniProtKB-SubCell"/>
</dbReference>
<dbReference type="InterPro" id="IPR024520">
    <property type="entry name" value="DUF3558"/>
</dbReference>
<dbReference type="Pfam" id="PF12079">
    <property type="entry name" value="DUF3558"/>
    <property type="match status" value="1"/>
</dbReference>
<dbReference type="PROSITE" id="PS51257">
    <property type="entry name" value="PROKAR_LIPOPROTEIN"/>
    <property type="match status" value="1"/>
</dbReference>
<proteinExistence type="evidence at protein level"/>
<protein>
    <recommendedName>
        <fullName>Putative lipoprotein LprB</fullName>
    </recommendedName>
</protein>